<name>HEM1_GEOUR</name>
<reference key="1">
    <citation type="submission" date="2007-05" db="EMBL/GenBank/DDBJ databases">
        <title>Complete sequence of Geobacter uraniireducens Rf4.</title>
        <authorList>
            <consortium name="US DOE Joint Genome Institute"/>
            <person name="Copeland A."/>
            <person name="Lucas S."/>
            <person name="Lapidus A."/>
            <person name="Barry K."/>
            <person name="Detter J.C."/>
            <person name="Glavina del Rio T."/>
            <person name="Hammon N."/>
            <person name="Israni S."/>
            <person name="Dalin E."/>
            <person name="Tice H."/>
            <person name="Pitluck S."/>
            <person name="Chertkov O."/>
            <person name="Brettin T."/>
            <person name="Bruce D."/>
            <person name="Han C."/>
            <person name="Schmutz J."/>
            <person name="Larimer F."/>
            <person name="Land M."/>
            <person name="Hauser L."/>
            <person name="Kyrpides N."/>
            <person name="Mikhailova N."/>
            <person name="Shelobolina E."/>
            <person name="Aklujkar M."/>
            <person name="Lovley D."/>
            <person name="Richardson P."/>
        </authorList>
    </citation>
    <scope>NUCLEOTIDE SEQUENCE [LARGE SCALE GENOMIC DNA]</scope>
    <source>
        <strain>ATCC BAA-1134 / JCM 13001 / Rf4</strain>
    </source>
</reference>
<dbReference type="EC" id="1.2.1.70" evidence="1"/>
<dbReference type="EMBL" id="CP000698">
    <property type="protein sequence ID" value="ABQ24576.1"/>
    <property type="molecule type" value="Genomic_DNA"/>
</dbReference>
<dbReference type="RefSeq" id="WP_011937302.1">
    <property type="nucleotide sequence ID" value="NC_009483.1"/>
</dbReference>
<dbReference type="SMR" id="A5GCW3"/>
<dbReference type="STRING" id="351605.Gura_0360"/>
<dbReference type="KEGG" id="gur:Gura_0360"/>
<dbReference type="HOGENOM" id="CLU_035113_2_2_7"/>
<dbReference type="OrthoDB" id="110209at2"/>
<dbReference type="UniPathway" id="UPA00251">
    <property type="reaction ID" value="UER00316"/>
</dbReference>
<dbReference type="Proteomes" id="UP000006695">
    <property type="component" value="Chromosome"/>
</dbReference>
<dbReference type="GO" id="GO:0008883">
    <property type="term" value="F:glutamyl-tRNA reductase activity"/>
    <property type="evidence" value="ECO:0007669"/>
    <property type="project" value="UniProtKB-UniRule"/>
</dbReference>
<dbReference type="GO" id="GO:0050661">
    <property type="term" value="F:NADP binding"/>
    <property type="evidence" value="ECO:0007669"/>
    <property type="project" value="InterPro"/>
</dbReference>
<dbReference type="GO" id="GO:0019353">
    <property type="term" value="P:protoporphyrinogen IX biosynthetic process from glutamate"/>
    <property type="evidence" value="ECO:0007669"/>
    <property type="project" value="TreeGrafter"/>
</dbReference>
<dbReference type="CDD" id="cd05213">
    <property type="entry name" value="NAD_bind_Glutamyl_tRNA_reduct"/>
    <property type="match status" value="1"/>
</dbReference>
<dbReference type="FunFam" id="3.30.460.30:FF:000001">
    <property type="entry name" value="Glutamyl-tRNA reductase"/>
    <property type="match status" value="1"/>
</dbReference>
<dbReference type="FunFam" id="3.40.50.720:FF:000031">
    <property type="entry name" value="Glutamyl-tRNA reductase"/>
    <property type="match status" value="1"/>
</dbReference>
<dbReference type="Gene3D" id="3.30.460.30">
    <property type="entry name" value="Glutamyl-tRNA reductase, N-terminal domain"/>
    <property type="match status" value="1"/>
</dbReference>
<dbReference type="Gene3D" id="3.40.50.720">
    <property type="entry name" value="NAD(P)-binding Rossmann-like Domain"/>
    <property type="match status" value="1"/>
</dbReference>
<dbReference type="HAMAP" id="MF_00087">
    <property type="entry name" value="Glu_tRNA_reductase"/>
    <property type="match status" value="1"/>
</dbReference>
<dbReference type="InterPro" id="IPR000343">
    <property type="entry name" value="4pyrrol_synth_GluRdtase"/>
</dbReference>
<dbReference type="InterPro" id="IPR015896">
    <property type="entry name" value="4pyrrol_synth_GluRdtase_dimer"/>
</dbReference>
<dbReference type="InterPro" id="IPR015895">
    <property type="entry name" value="4pyrrol_synth_GluRdtase_N"/>
</dbReference>
<dbReference type="InterPro" id="IPR018214">
    <property type="entry name" value="GluRdtase_CS"/>
</dbReference>
<dbReference type="InterPro" id="IPR036453">
    <property type="entry name" value="GluRdtase_dimer_dom_sf"/>
</dbReference>
<dbReference type="InterPro" id="IPR036343">
    <property type="entry name" value="GluRdtase_N_sf"/>
</dbReference>
<dbReference type="InterPro" id="IPR036291">
    <property type="entry name" value="NAD(P)-bd_dom_sf"/>
</dbReference>
<dbReference type="InterPro" id="IPR006151">
    <property type="entry name" value="Shikm_DH/Glu-tRNA_Rdtase"/>
</dbReference>
<dbReference type="NCBIfam" id="TIGR01035">
    <property type="entry name" value="hemA"/>
    <property type="match status" value="1"/>
</dbReference>
<dbReference type="NCBIfam" id="NF000744">
    <property type="entry name" value="PRK00045.1-3"/>
    <property type="match status" value="1"/>
</dbReference>
<dbReference type="PANTHER" id="PTHR43013">
    <property type="entry name" value="GLUTAMYL-TRNA REDUCTASE"/>
    <property type="match status" value="1"/>
</dbReference>
<dbReference type="PANTHER" id="PTHR43013:SF1">
    <property type="entry name" value="GLUTAMYL-TRNA REDUCTASE"/>
    <property type="match status" value="1"/>
</dbReference>
<dbReference type="Pfam" id="PF00745">
    <property type="entry name" value="GlutR_dimer"/>
    <property type="match status" value="1"/>
</dbReference>
<dbReference type="Pfam" id="PF05201">
    <property type="entry name" value="GlutR_N"/>
    <property type="match status" value="1"/>
</dbReference>
<dbReference type="Pfam" id="PF01488">
    <property type="entry name" value="Shikimate_DH"/>
    <property type="match status" value="1"/>
</dbReference>
<dbReference type="PIRSF" id="PIRSF000445">
    <property type="entry name" value="4pyrrol_synth_GluRdtase"/>
    <property type="match status" value="1"/>
</dbReference>
<dbReference type="SUPFAM" id="SSF69742">
    <property type="entry name" value="Glutamyl tRNA-reductase catalytic, N-terminal domain"/>
    <property type="match status" value="1"/>
</dbReference>
<dbReference type="SUPFAM" id="SSF69075">
    <property type="entry name" value="Glutamyl tRNA-reductase dimerization domain"/>
    <property type="match status" value="1"/>
</dbReference>
<dbReference type="SUPFAM" id="SSF51735">
    <property type="entry name" value="NAD(P)-binding Rossmann-fold domains"/>
    <property type="match status" value="1"/>
</dbReference>
<dbReference type="PROSITE" id="PS00747">
    <property type="entry name" value="GLUTR"/>
    <property type="match status" value="1"/>
</dbReference>
<comment type="function">
    <text evidence="1">Catalyzes the NADPH-dependent reduction of glutamyl-tRNA(Glu) to glutamate 1-semialdehyde (GSA).</text>
</comment>
<comment type="catalytic activity">
    <reaction evidence="1">
        <text>(S)-4-amino-5-oxopentanoate + tRNA(Glu) + NADP(+) = L-glutamyl-tRNA(Glu) + NADPH + H(+)</text>
        <dbReference type="Rhea" id="RHEA:12344"/>
        <dbReference type="Rhea" id="RHEA-COMP:9663"/>
        <dbReference type="Rhea" id="RHEA-COMP:9680"/>
        <dbReference type="ChEBI" id="CHEBI:15378"/>
        <dbReference type="ChEBI" id="CHEBI:57501"/>
        <dbReference type="ChEBI" id="CHEBI:57783"/>
        <dbReference type="ChEBI" id="CHEBI:58349"/>
        <dbReference type="ChEBI" id="CHEBI:78442"/>
        <dbReference type="ChEBI" id="CHEBI:78520"/>
        <dbReference type="EC" id="1.2.1.70"/>
    </reaction>
</comment>
<comment type="pathway">
    <text evidence="1">Porphyrin-containing compound metabolism; protoporphyrin-IX biosynthesis; 5-aminolevulinate from L-glutamyl-tRNA(Glu): step 1/2.</text>
</comment>
<comment type="subunit">
    <text evidence="1">Homodimer.</text>
</comment>
<comment type="domain">
    <text evidence="1">Possesses an unusual extended V-shaped dimeric structure with each monomer consisting of three distinct domains arranged along a curved 'spinal' alpha-helix. The N-terminal catalytic domain specifically recognizes the glutamate moiety of the substrate. The second domain is the NADPH-binding domain, and the third C-terminal domain is responsible for dimerization.</text>
</comment>
<comment type="miscellaneous">
    <text evidence="1">During catalysis, the active site Cys acts as a nucleophile attacking the alpha-carbonyl group of tRNA-bound glutamate with the formation of a thioester intermediate between enzyme and glutamate, and the concomitant release of tRNA(Glu). The thioester intermediate is finally reduced by direct hydride transfer from NADPH, to form the product GSA.</text>
</comment>
<comment type="similarity">
    <text evidence="1">Belongs to the glutamyl-tRNA reductase family.</text>
</comment>
<proteinExistence type="inferred from homology"/>
<evidence type="ECO:0000255" key="1">
    <source>
        <dbReference type="HAMAP-Rule" id="MF_00087"/>
    </source>
</evidence>
<protein>
    <recommendedName>
        <fullName evidence="1">Glutamyl-tRNA reductase</fullName>
        <shortName evidence="1">GluTR</shortName>
        <ecNumber evidence="1">1.2.1.70</ecNumber>
    </recommendedName>
</protein>
<organism>
    <name type="scientific">Geotalea uraniireducens (strain Rf4)</name>
    <name type="common">Geobacter uraniireducens</name>
    <dbReference type="NCBI Taxonomy" id="351605"/>
    <lineage>
        <taxon>Bacteria</taxon>
        <taxon>Pseudomonadati</taxon>
        <taxon>Thermodesulfobacteriota</taxon>
        <taxon>Desulfuromonadia</taxon>
        <taxon>Geobacterales</taxon>
        <taxon>Geobacteraceae</taxon>
        <taxon>Geotalea</taxon>
    </lineage>
</organism>
<keyword id="KW-0521">NADP</keyword>
<keyword id="KW-0560">Oxidoreductase</keyword>
<keyword id="KW-0627">Porphyrin biosynthesis</keyword>
<keyword id="KW-1185">Reference proteome</keyword>
<sequence length="434" mass="48621">MNIIVVGLSHKTATVEIREKVAFAPTQMEKPLHALVSLPDITEAVIVSTCNRVEIYATTRDIAGGVARLKRFLADYHNISLETLEPHLYSYHGEAATRHVFRVASSLDSMVVGEPQILGQIKTSYGYAAEYKSSGIILNRFLHKAFSVAKRVRTETKIASSAVSVAFAAVELAKKIFGDLSDKTVMLIGAGEMCELAAKHFINTGVRGVMVTNRTFERAVKLAEEFDGKAVNYEELFDHLHKADIVLSSTGAPHFIIGPKNVEEVIRRRKMKPMFFIDIAVPRDIDPKVNDVENIYLYTVDDLNGVVATNLEQRNKEAEKAEAIVEQEIGQFFKWLSSLEVTPTIVALRSKFDEIRRAELAKTLANWKELPPDAEKRLEALTSAIMNKLLHQPTSVLKRAEQGNRNDLYIDALRNLFELETTRPEVEELGELEE</sequence>
<accession>A5GCW3</accession>
<gene>
    <name evidence="1" type="primary">hemA</name>
    <name type="ordered locus">Gura_0360</name>
</gene>
<feature type="chain" id="PRO_1000075410" description="Glutamyl-tRNA reductase">
    <location>
        <begin position="1"/>
        <end position="434"/>
    </location>
</feature>
<feature type="active site" description="Nucleophile" evidence="1">
    <location>
        <position position="50"/>
    </location>
</feature>
<feature type="binding site" evidence="1">
    <location>
        <begin position="49"/>
        <end position="52"/>
    </location>
    <ligand>
        <name>substrate</name>
    </ligand>
</feature>
<feature type="binding site" evidence="1">
    <location>
        <position position="109"/>
    </location>
    <ligand>
        <name>substrate</name>
    </ligand>
</feature>
<feature type="binding site" evidence="1">
    <location>
        <begin position="114"/>
        <end position="116"/>
    </location>
    <ligand>
        <name>substrate</name>
    </ligand>
</feature>
<feature type="binding site" evidence="1">
    <location>
        <position position="120"/>
    </location>
    <ligand>
        <name>substrate</name>
    </ligand>
</feature>
<feature type="binding site" evidence="1">
    <location>
        <begin position="189"/>
        <end position="194"/>
    </location>
    <ligand>
        <name>NADP(+)</name>
        <dbReference type="ChEBI" id="CHEBI:58349"/>
    </ligand>
</feature>
<feature type="site" description="Important for activity" evidence="1">
    <location>
        <position position="99"/>
    </location>
</feature>